<keyword id="KW-0240">DNA-directed RNA polymerase</keyword>
<keyword id="KW-0548">Nucleotidyltransferase</keyword>
<keyword id="KW-0934">Plastid</keyword>
<keyword id="KW-0691">RNA editing</keyword>
<keyword id="KW-0804">Transcription</keyword>
<keyword id="KW-0808">Transferase</keyword>
<name>RPOB_CUSRE</name>
<sequence length="1070" mass="120490">MLVDGKGGITTIPGLNQIQLEGFCRFIDQGLMEELSKFQKIEDIDQEIEFQLFVETYQLVEPLIKERDAVYDSLTYSSELYVSAGLIRKASKDMQEQTIFIGSLPIMNSLGTFIVNGIYRIVINQILQSPGIYYRSELDQNGISVYTGTIISDWGGRLELEIDRKARVWARVSRKQKISILVLLSAMGLNLREILENVCYPEILLSFLRDKEKKKIGSKENAILEFYKKFACVGGDPLFSESLCKELQNKFFQQRCELGRIGRRNMNRRLHLDIPHNNTFLLPRDILEATDHLIGLKFGMGTLDDMNHLQNKRIRSVADLLQDQFGLALVRLENAVQGTLCGAIRHKRIPTPQNLVTSTLLTTTYESFFGLHPLSQVLDGTNPLTQIVHARKVSSLGPGGLTGRTASFRIRDIHPSHYGRICPIDTSEGINVGLIGSLAIHVRIGNWGSLESPFYEISDRLTGVRVLHLSPGRDEYYMVAAGNSLALNQDIQEDQVVPARYRQEFLTIAWEQVNLRSIFPFQYFSIGASLIPFIEHNDANRALMSSNMQRQAVPLTWSEKCIVGTGMERQAALDSGSLAIAEREGRVIYTDTEKILVSGDGKTINIPLVMYQRSNKNTCMYQQPQVRRGQFIKKGQILAGGAATVEGELALGKSVLVAYMPWEGYNFEDAVLISECLVYEDIFTSFHIKKYEIQIHMTTQGPEKVTNEIPHLEAHLIRNLDKNGIVLQGSWVEPGDVLVGKLTPQVVKESAYAPEDRLLRAILGIPVSASKETCLKVPIGARGRVIDVRWIQKKGGYGYNPEKIRVYILQKREIKVGDKVAGRHGNKGIISKILPRQDMPYLQDGRSVDLVFNPLGVPSRMNVGQIFECSLGLAGSLLDRHYRIAPFDERYEQEASRKIVFSELYEASKQTANPWAFEPEYPGKSRIFDGRTGKTFEHPVLIGKPYILKLIHQVDDKIHGRSIGHYALVTQQPLRGRAKQGGQRVGEMEVWALEGFGVAHILQEMLTYKSDHIRARQEVLGTTIVGGTIPSPKNAPESFRLLVRELRSLALELTHFLVSEKNFQVNRKEA</sequence>
<accession>A7M958</accession>
<reference key="1">
    <citation type="journal article" date="2007" name="BMC Plant Biol.">
        <title>Complete DNA sequences of the plastid genomes of two parasitic flowering plant species, Cuscuta reflexa and Cuscuta gronovii.</title>
        <authorList>
            <person name="Funk H.T."/>
            <person name="Berg S."/>
            <person name="Krupinska K."/>
            <person name="Maier U.-G."/>
            <person name="Krause K."/>
        </authorList>
    </citation>
    <scope>NUCLEOTIDE SEQUENCE [LARGE SCALE GENOMIC DNA]</scope>
    <scope>RNA EDITING</scope>
</reference>
<dbReference type="EC" id="2.7.7.6"/>
<dbReference type="EMBL" id="AM711640">
    <property type="protein sequence ID" value="CAM98386.1"/>
    <property type="status" value="ALT_SEQ"/>
    <property type="molecule type" value="Genomic_DNA"/>
</dbReference>
<dbReference type="RefSeq" id="YP_001430100.1">
    <property type="nucleotide sequence ID" value="NC_009766.1"/>
</dbReference>
<dbReference type="SMR" id="A7M958"/>
<dbReference type="GeneID" id="5536671"/>
<dbReference type="GO" id="GO:0000428">
    <property type="term" value="C:DNA-directed RNA polymerase complex"/>
    <property type="evidence" value="ECO:0007669"/>
    <property type="project" value="UniProtKB-KW"/>
</dbReference>
<dbReference type="GO" id="GO:0005739">
    <property type="term" value="C:mitochondrion"/>
    <property type="evidence" value="ECO:0007669"/>
    <property type="project" value="GOC"/>
</dbReference>
<dbReference type="GO" id="GO:0009536">
    <property type="term" value="C:plastid"/>
    <property type="evidence" value="ECO:0007669"/>
    <property type="project" value="UniProtKB-SubCell"/>
</dbReference>
<dbReference type="GO" id="GO:0003677">
    <property type="term" value="F:DNA binding"/>
    <property type="evidence" value="ECO:0007669"/>
    <property type="project" value="UniProtKB-UniRule"/>
</dbReference>
<dbReference type="GO" id="GO:0003899">
    <property type="term" value="F:DNA-directed RNA polymerase activity"/>
    <property type="evidence" value="ECO:0007669"/>
    <property type="project" value="UniProtKB-UniRule"/>
</dbReference>
<dbReference type="GO" id="GO:0032549">
    <property type="term" value="F:ribonucleoside binding"/>
    <property type="evidence" value="ECO:0007669"/>
    <property type="project" value="InterPro"/>
</dbReference>
<dbReference type="GO" id="GO:0006351">
    <property type="term" value="P:DNA-templated transcription"/>
    <property type="evidence" value="ECO:0007669"/>
    <property type="project" value="UniProtKB-UniRule"/>
</dbReference>
<dbReference type="CDD" id="cd00653">
    <property type="entry name" value="RNA_pol_B_RPB2"/>
    <property type="match status" value="1"/>
</dbReference>
<dbReference type="Gene3D" id="2.40.50.100">
    <property type="match status" value="1"/>
</dbReference>
<dbReference type="Gene3D" id="2.40.50.150">
    <property type="match status" value="1"/>
</dbReference>
<dbReference type="Gene3D" id="3.90.1100.10">
    <property type="match status" value="1"/>
</dbReference>
<dbReference type="Gene3D" id="2.30.150.10">
    <property type="entry name" value="DNA-directed RNA polymerase, beta subunit, external 1 domain"/>
    <property type="match status" value="1"/>
</dbReference>
<dbReference type="Gene3D" id="2.40.270.10">
    <property type="entry name" value="DNA-directed RNA polymerase, subunit 2, domain 6"/>
    <property type="match status" value="2"/>
</dbReference>
<dbReference type="Gene3D" id="3.90.1800.10">
    <property type="entry name" value="RNA polymerase alpha subunit dimerisation domain"/>
    <property type="match status" value="1"/>
</dbReference>
<dbReference type="Gene3D" id="3.90.1110.10">
    <property type="entry name" value="RNA polymerase Rpb2, domain 2"/>
    <property type="match status" value="1"/>
</dbReference>
<dbReference type="HAMAP" id="MF_01321">
    <property type="entry name" value="RNApol_bact_RpoB"/>
    <property type="match status" value="1"/>
</dbReference>
<dbReference type="InterPro" id="IPR042107">
    <property type="entry name" value="DNA-dir_RNA_pol_bsu_ext_1_sf"/>
</dbReference>
<dbReference type="InterPro" id="IPR015712">
    <property type="entry name" value="DNA-dir_RNA_pol_su2"/>
</dbReference>
<dbReference type="InterPro" id="IPR007120">
    <property type="entry name" value="DNA-dir_RNAP_su2_dom"/>
</dbReference>
<dbReference type="InterPro" id="IPR037033">
    <property type="entry name" value="DNA-dir_RNAP_su2_hyb_sf"/>
</dbReference>
<dbReference type="InterPro" id="IPR010243">
    <property type="entry name" value="RNA_pol_bsu_bac"/>
</dbReference>
<dbReference type="InterPro" id="IPR007121">
    <property type="entry name" value="RNA_pol_bsu_CS"/>
</dbReference>
<dbReference type="InterPro" id="IPR007644">
    <property type="entry name" value="RNA_pol_bsu_protrusion"/>
</dbReference>
<dbReference type="InterPro" id="IPR007642">
    <property type="entry name" value="RNA_pol_Rpb2_2"/>
</dbReference>
<dbReference type="InterPro" id="IPR037034">
    <property type="entry name" value="RNA_pol_Rpb2_2_sf"/>
</dbReference>
<dbReference type="InterPro" id="IPR007645">
    <property type="entry name" value="RNA_pol_Rpb2_3"/>
</dbReference>
<dbReference type="InterPro" id="IPR007641">
    <property type="entry name" value="RNA_pol_Rpb2_7"/>
</dbReference>
<dbReference type="InterPro" id="IPR014724">
    <property type="entry name" value="RNA_pol_RPB2_OB-fold"/>
</dbReference>
<dbReference type="NCBIfam" id="NF001616">
    <property type="entry name" value="PRK00405.1"/>
    <property type="match status" value="1"/>
</dbReference>
<dbReference type="PANTHER" id="PTHR20856">
    <property type="entry name" value="DNA-DIRECTED RNA POLYMERASE I SUBUNIT 2"/>
    <property type="match status" value="1"/>
</dbReference>
<dbReference type="Pfam" id="PF04563">
    <property type="entry name" value="RNA_pol_Rpb2_1"/>
    <property type="match status" value="1"/>
</dbReference>
<dbReference type="Pfam" id="PF04561">
    <property type="entry name" value="RNA_pol_Rpb2_2"/>
    <property type="match status" value="1"/>
</dbReference>
<dbReference type="Pfam" id="PF04565">
    <property type="entry name" value="RNA_pol_Rpb2_3"/>
    <property type="match status" value="1"/>
</dbReference>
<dbReference type="Pfam" id="PF00562">
    <property type="entry name" value="RNA_pol_Rpb2_6"/>
    <property type="match status" value="1"/>
</dbReference>
<dbReference type="Pfam" id="PF04560">
    <property type="entry name" value="RNA_pol_Rpb2_7"/>
    <property type="match status" value="1"/>
</dbReference>
<dbReference type="SUPFAM" id="SSF64484">
    <property type="entry name" value="beta and beta-prime subunits of DNA dependent RNA-polymerase"/>
    <property type="match status" value="1"/>
</dbReference>
<dbReference type="PROSITE" id="PS01166">
    <property type="entry name" value="RNA_POL_BETA"/>
    <property type="match status" value="1"/>
</dbReference>
<proteinExistence type="evidence at transcript level"/>
<gene>
    <name type="primary">rpoB</name>
</gene>
<organism>
    <name type="scientific">Cuscuta reflexa</name>
    <name type="common">Southern Asian dodder</name>
    <dbReference type="NCBI Taxonomy" id="4129"/>
    <lineage>
        <taxon>Eukaryota</taxon>
        <taxon>Viridiplantae</taxon>
        <taxon>Streptophyta</taxon>
        <taxon>Embryophyta</taxon>
        <taxon>Tracheophyta</taxon>
        <taxon>Spermatophyta</taxon>
        <taxon>Magnoliopsida</taxon>
        <taxon>eudicotyledons</taxon>
        <taxon>Gunneridae</taxon>
        <taxon>Pentapetalae</taxon>
        <taxon>asterids</taxon>
        <taxon>lamiids</taxon>
        <taxon>Solanales</taxon>
        <taxon>Convolvulaceae</taxon>
        <taxon>Cuscuteae</taxon>
        <taxon>Cuscuta</taxon>
        <taxon>Cuscuta subgen. Monogynella</taxon>
    </lineage>
</organism>
<comment type="function">
    <text evidence="1">DNA-dependent RNA polymerase catalyzes the transcription of DNA into RNA using the four ribonucleoside triphosphates as substrates.</text>
</comment>
<comment type="catalytic activity">
    <reaction>
        <text>RNA(n) + a ribonucleoside 5'-triphosphate = RNA(n+1) + diphosphate</text>
        <dbReference type="Rhea" id="RHEA:21248"/>
        <dbReference type="Rhea" id="RHEA-COMP:14527"/>
        <dbReference type="Rhea" id="RHEA-COMP:17342"/>
        <dbReference type="ChEBI" id="CHEBI:33019"/>
        <dbReference type="ChEBI" id="CHEBI:61557"/>
        <dbReference type="ChEBI" id="CHEBI:140395"/>
        <dbReference type="EC" id="2.7.7.6"/>
    </reaction>
</comment>
<comment type="subunit">
    <text evidence="1">In plastids the minimal PEP RNA polymerase catalytic core is composed of four subunits: alpha, beta, beta', and beta''. When a (nuclear-encoded) sigma factor is associated with the core the holoenzyme is formed, which can initiate transcription (By similarity).</text>
</comment>
<comment type="subcellular location">
    <subcellularLocation>
        <location>Plastid</location>
    </subcellularLocation>
</comment>
<comment type="RNA editing">
    <location>
        <position position="113" evidence="2"/>
    </location>
    <location>
        <position position="158" evidence="2"/>
    </location>
    <location>
        <position position="184" evidence="2"/>
    </location>
    <location>
        <position position="189" evidence="2"/>
    </location>
    <location>
        <position position="667" evidence="2"/>
    </location>
    <text>Editing at positions 113 and 158 is more efficient in photosynthetically active tissue.</text>
</comment>
<comment type="similarity">
    <text evidence="3">Belongs to the RNA polymerase beta chain family.</text>
</comment>
<comment type="caution">
    <text evidence="3">Young tissue from this organism is photosynthetic and contains some thylakoids, although the photosynthetic activity does not exceed the light compensation point.</text>
</comment>
<evidence type="ECO:0000250" key="1"/>
<evidence type="ECO:0000269" key="2">
    <source>
    </source>
</evidence>
<evidence type="ECO:0000305" key="3"/>
<geneLocation type="plastid"/>
<protein>
    <recommendedName>
        <fullName>DNA-directed RNA polymerase subunit beta</fullName>
        <ecNumber>2.7.7.6</ecNumber>
    </recommendedName>
    <alternativeName>
        <fullName>PEP</fullName>
    </alternativeName>
    <alternativeName>
        <fullName>Plastid-encoded RNA polymerase subunit beta</fullName>
        <shortName>RNA polymerase subunit beta</shortName>
    </alternativeName>
</protein>
<feature type="chain" id="PRO_0000308474" description="DNA-directed RNA polymerase subunit beta">
    <location>
        <begin position="1"/>
        <end position="1070"/>
    </location>
</feature>